<sequence>MSRTRYDWSKLCHDILRLILESLHYKDYHRARTVCSNWYTASTTCKRPLYPWRIKFNKISTSLFDPREDKIHEIQHPGIEFSDRNVLASCSNWFLMVDSGLEFYLLNAFTRERINLPSMESSILGKERLEKEVAWKHFIERTDIISTKKQACLWINERTGDYVVAWSIKQHYLFTYKKGDDSWLNLEGTKCVSMALNKDYKLYVYALDNSIKIFDLYGEFPSEIVEENPYRNHPFSFRFVSKPEEHAWKQVVAITNSGEVLMIVSLKGLEDKRLFYIYKMDFGSCNWERVDSLGGEMLIFGHGVTIRAPILDINGLGIKSDSICFRGDDLWPLSQLFIPITQPMCGVFDLATSTITWPKSLDASVLKSFWFVPGHA</sequence>
<dbReference type="EMBL" id="AC002334">
    <property type="protein sequence ID" value="AAC04903.1"/>
    <property type="molecule type" value="Genomic_DNA"/>
</dbReference>
<dbReference type="EMBL" id="CP002685">
    <property type="protein sequence ID" value="AEC08797.1"/>
    <property type="molecule type" value="Genomic_DNA"/>
</dbReference>
<dbReference type="PIR" id="E84742">
    <property type="entry name" value="E84742"/>
</dbReference>
<dbReference type="RefSeq" id="NP_180878.1">
    <property type="nucleotide sequence ID" value="NM_128879.1"/>
</dbReference>
<dbReference type="FunCoup" id="O49315">
    <property type="interactions" value="35"/>
</dbReference>
<dbReference type="STRING" id="3702.O49315"/>
<dbReference type="iPTMnet" id="O49315"/>
<dbReference type="PaxDb" id="3702-AT2G33200.1"/>
<dbReference type="EnsemblPlants" id="AT2G33200.1">
    <property type="protein sequence ID" value="AT2G33200.1"/>
    <property type="gene ID" value="AT2G33200"/>
</dbReference>
<dbReference type="GeneID" id="817881"/>
<dbReference type="Gramene" id="AT2G33200.1">
    <property type="protein sequence ID" value="AT2G33200.1"/>
    <property type="gene ID" value="AT2G33200"/>
</dbReference>
<dbReference type="KEGG" id="ath:AT2G33200"/>
<dbReference type="Araport" id="AT2G33200"/>
<dbReference type="TAIR" id="AT2G33200">
    <property type="gene designation" value="ATFDB17"/>
</dbReference>
<dbReference type="HOGENOM" id="CLU_019286_7_1_1"/>
<dbReference type="InParanoid" id="O49315"/>
<dbReference type="OMA" id="LWMNERT"/>
<dbReference type="PhylomeDB" id="O49315"/>
<dbReference type="PRO" id="PR:O49315"/>
<dbReference type="Proteomes" id="UP000006548">
    <property type="component" value="Chromosome 2"/>
</dbReference>
<dbReference type="ExpressionAtlas" id="O49315">
    <property type="expression patterns" value="baseline and differential"/>
</dbReference>
<dbReference type="CDD" id="cd09917">
    <property type="entry name" value="F-box_SF"/>
    <property type="match status" value="1"/>
</dbReference>
<dbReference type="Gene3D" id="1.20.1280.50">
    <property type="match status" value="1"/>
</dbReference>
<dbReference type="InterPro" id="IPR036047">
    <property type="entry name" value="F-box-like_dom_sf"/>
</dbReference>
<dbReference type="InterPro" id="IPR050942">
    <property type="entry name" value="F-box_BR-signaling"/>
</dbReference>
<dbReference type="InterPro" id="IPR001810">
    <property type="entry name" value="F-box_dom"/>
</dbReference>
<dbReference type="InterPro" id="IPR005174">
    <property type="entry name" value="KIB1-4_b-propeller"/>
</dbReference>
<dbReference type="PANTHER" id="PTHR44259:SF27">
    <property type="entry name" value="F-BOX DOMAIN-CONTAINING PROTEIN"/>
    <property type="match status" value="1"/>
</dbReference>
<dbReference type="PANTHER" id="PTHR44259">
    <property type="entry name" value="OS07G0183000 PROTEIN-RELATED"/>
    <property type="match status" value="1"/>
</dbReference>
<dbReference type="Pfam" id="PF03478">
    <property type="entry name" value="Beta-prop_KIB1-4"/>
    <property type="match status" value="1"/>
</dbReference>
<dbReference type="Pfam" id="PF00646">
    <property type="entry name" value="F-box"/>
    <property type="match status" value="1"/>
</dbReference>
<dbReference type="SUPFAM" id="SSF81383">
    <property type="entry name" value="F-box domain"/>
    <property type="match status" value="1"/>
</dbReference>
<proteinExistence type="predicted"/>
<reference key="1">
    <citation type="journal article" date="1999" name="Nature">
        <title>Sequence and analysis of chromosome 2 of the plant Arabidopsis thaliana.</title>
        <authorList>
            <person name="Lin X."/>
            <person name="Kaul S."/>
            <person name="Rounsley S.D."/>
            <person name="Shea T.P."/>
            <person name="Benito M.-I."/>
            <person name="Town C.D."/>
            <person name="Fujii C.Y."/>
            <person name="Mason T.M."/>
            <person name="Bowman C.L."/>
            <person name="Barnstead M.E."/>
            <person name="Feldblyum T.V."/>
            <person name="Buell C.R."/>
            <person name="Ketchum K.A."/>
            <person name="Lee J.J."/>
            <person name="Ronning C.M."/>
            <person name="Koo H.L."/>
            <person name="Moffat K.S."/>
            <person name="Cronin L.A."/>
            <person name="Shen M."/>
            <person name="Pai G."/>
            <person name="Van Aken S."/>
            <person name="Umayam L."/>
            <person name="Tallon L.J."/>
            <person name="Gill J.E."/>
            <person name="Adams M.D."/>
            <person name="Carrera A.J."/>
            <person name="Creasy T.H."/>
            <person name="Goodman H.M."/>
            <person name="Somerville C.R."/>
            <person name="Copenhaver G.P."/>
            <person name="Preuss D."/>
            <person name="Nierman W.C."/>
            <person name="White O."/>
            <person name="Eisen J.A."/>
            <person name="Salzberg S.L."/>
            <person name="Fraser C.M."/>
            <person name="Venter J.C."/>
        </authorList>
    </citation>
    <scope>NUCLEOTIDE SEQUENCE [LARGE SCALE GENOMIC DNA]</scope>
    <source>
        <strain>cv. Columbia</strain>
    </source>
</reference>
<reference key="2">
    <citation type="journal article" date="2017" name="Plant J.">
        <title>Araport11: a complete reannotation of the Arabidopsis thaliana reference genome.</title>
        <authorList>
            <person name="Cheng C.Y."/>
            <person name="Krishnakumar V."/>
            <person name="Chan A.P."/>
            <person name="Thibaud-Nissen F."/>
            <person name="Schobel S."/>
            <person name="Town C.D."/>
        </authorList>
    </citation>
    <scope>GENOME REANNOTATION</scope>
    <source>
        <strain>cv. Columbia</strain>
    </source>
</reference>
<protein>
    <recommendedName>
        <fullName>Putative F-box protein At2g33200</fullName>
    </recommendedName>
</protein>
<accession>O49315</accession>
<organism>
    <name type="scientific">Arabidopsis thaliana</name>
    <name type="common">Mouse-ear cress</name>
    <dbReference type="NCBI Taxonomy" id="3702"/>
    <lineage>
        <taxon>Eukaryota</taxon>
        <taxon>Viridiplantae</taxon>
        <taxon>Streptophyta</taxon>
        <taxon>Embryophyta</taxon>
        <taxon>Tracheophyta</taxon>
        <taxon>Spermatophyta</taxon>
        <taxon>Magnoliopsida</taxon>
        <taxon>eudicotyledons</taxon>
        <taxon>Gunneridae</taxon>
        <taxon>Pentapetalae</taxon>
        <taxon>rosids</taxon>
        <taxon>malvids</taxon>
        <taxon>Brassicales</taxon>
        <taxon>Brassicaceae</taxon>
        <taxon>Camelineae</taxon>
        <taxon>Arabidopsis</taxon>
    </lineage>
</organism>
<gene>
    <name type="ordered locus">At2g33200</name>
    <name type="ORF">F25I18.6</name>
</gene>
<feature type="chain" id="PRO_0000283394" description="Putative F-box protein At2g33200">
    <location>
        <begin position="1"/>
        <end position="376"/>
    </location>
</feature>
<feature type="domain" description="F-box">
    <location>
        <begin position="6"/>
        <end position="53"/>
    </location>
</feature>
<name>FB123_ARATH</name>
<keyword id="KW-1185">Reference proteome</keyword>